<gene>
    <name evidence="1" type="primary">mutS</name>
    <name type="ordered locus">XF_1716</name>
</gene>
<comment type="function">
    <text evidence="1">This protein is involved in the repair of mismatches in DNA. It is possible that it carries out the mismatch recognition step. This protein has a weak ATPase activity.</text>
</comment>
<comment type="similarity">
    <text evidence="1">Belongs to the DNA mismatch repair MutS family.</text>
</comment>
<comment type="sequence caution" evidence="2">
    <conflict type="erroneous initiation">
        <sequence resource="EMBL-CDS" id="AAF84525"/>
    </conflict>
</comment>
<feature type="chain" id="PRO_0000115171" description="DNA mismatch repair protein MutS">
    <location>
        <begin position="1"/>
        <end position="868"/>
    </location>
</feature>
<feature type="binding site" evidence="1">
    <location>
        <begin position="620"/>
        <end position="627"/>
    </location>
    <ligand>
        <name>ATP</name>
        <dbReference type="ChEBI" id="CHEBI:30616"/>
    </ligand>
</feature>
<name>MUTS_XYLFA</name>
<evidence type="ECO:0000255" key="1">
    <source>
        <dbReference type="HAMAP-Rule" id="MF_00096"/>
    </source>
</evidence>
<evidence type="ECO:0000305" key="2"/>
<proteinExistence type="inferred from homology"/>
<dbReference type="EMBL" id="AE003849">
    <property type="protein sequence ID" value="AAF84525.1"/>
    <property type="status" value="ALT_INIT"/>
    <property type="molecule type" value="Genomic_DNA"/>
</dbReference>
<dbReference type="PIR" id="G82646">
    <property type="entry name" value="G82646"/>
</dbReference>
<dbReference type="SMR" id="Q9PCR2"/>
<dbReference type="STRING" id="160492.XF_1716"/>
<dbReference type="KEGG" id="xfa:XF_1716"/>
<dbReference type="eggNOG" id="COG0249">
    <property type="taxonomic scope" value="Bacteria"/>
</dbReference>
<dbReference type="HOGENOM" id="CLU_002472_4_1_6"/>
<dbReference type="Proteomes" id="UP000000812">
    <property type="component" value="Chromosome"/>
</dbReference>
<dbReference type="GO" id="GO:0005829">
    <property type="term" value="C:cytosol"/>
    <property type="evidence" value="ECO:0007669"/>
    <property type="project" value="TreeGrafter"/>
</dbReference>
<dbReference type="GO" id="GO:0005524">
    <property type="term" value="F:ATP binding"/>
    <property type="evidence" value="ECO:0007669"/>
    <property type="project" value="UniProtKB-UniRule"/>
</dbReference>
<dbReference type="GO" id="GO:0140664">
    <property type="term" value="F:ATP-dependent DNA damage sensor activity"/>
    <property type="evidence" value="ECO:0007669"/>
    <property type="project" value="InterPro"/>
</dbReference>
<dbReference type="GO" id="GO:0003684">
    <property type="term" value="F:damaged DNA binding"/>
    <property type="evidence" value="ECO:0007669"/>
    <property type="project" value="UniProtKB-UniRule"/>
</dbReference>
<dbReference type="GO" id="GO:0030983">
    <property type="term" value="F:mismatched DNA binding"/>
    <property type="evidence" value="ECO:0007669"/>
    <property type="project" value="InterPro"/>
</dbReference>
<dbReference type="GO" id="GO:0006298">
    <property type="term" value="P:mismatch repair"/>
    <property type="evidence" value="ECO:0007669"/>
    <property type="project" value="UniProtKB-UniRule"/>
</dbReference>
<dbReference type="FunFam" id="1.10.1420.10:FF:000002">
    <property type="entry name" value="DNA mismatch repair protein MutS"/>
    <property type="match status" value="1"/>
</dbReference>
<dbReference type="FunFam" id="3.40.1170.10:FF:000001">
    <property type="entry name" value="DNA mismatch repair protein MutS"/>
    <property type="match status" value="1"/>
</dbReference>
<dbReference type="FunFam" id="3.40.50.300:FF:000283">
    <property type="entry name" value="DNA mismatch repair protein MutS"/>
    <property type="match status" value="1"/>
</dbReference>
<dbReference type="Gene3D" id="1.10.1420.10">
    <property type="match status" value="2"/>
</dbReference>
<dbReference type="Gene3D" id="6.10.140.430">
    <property type="match status" value="1"/>
</dbReference>
<dbReference type="Gene3D" id="3.40.1170.10">
    <property type="entry name" value="DNA repair protein MutS, domain I"/>
    <property type="match status" value="1"/>
</dbReference>
<dbReference type="Gene3D" id="3.30.420.110">
    <property type="entry name" value="MutS, connector domain"/>
    <property type="match status" value="1"/>
</dbReference>
<dbReference type="Gene3D" id="3.40.50.300">
    <property type="entry name" value="P-loop containing nucleotide triphosphate hydrolases"/>
    <property type="match status" value="1"/>
</dbReference>
<dbReference type="HAMAP" id="MF_00096">
    <property type="entry name" value="MutS"/>
    <property type="match status" value="1"/>
</dbReference>
<dbReference type="InterPro" id="IPR005748">
    <property type="entry name" value="DNA_mismatch_repair_MutS"/>
</dbReference>
<dbReference type="InterPro" id="IPR007695">
    <property type="entry name" value="DNA_mismatch_repair_MutS-lik_N"/>
</dbReference>
<dbReference type="InterPro" id="IPR017261">
    <property type="entry name" value="DNA_mismatch_repair_MutS/MSH"/>
</dbReference>
<dbReference type="InterPro" id="IPR000432">
    <property type="entry name" value="DNA_mismatch_repair_MutS_C"/>
</dbReference>
<dbReference type="InterPro" id="IPR007861">
    <property type="entry name" value="DNA_mismatch_repair_MutS_clamp"/>
</dbReference>
<dbReference type="InterPro" id="IPR007696">
    <property type="entry name" value="DNA_mismatch_repair_MutS_core"/>
</dbReference>
<dbReference type="InterPro" id="IPR016151">
    <property type="entry name" value="DNA_mismatch_repair_MutS_N"/>
</dbReference>
<dbReference type="InterPro" id="IPR036187">
    <property type="entry name" value="DNA_mismatch_repair_MutS_sf"/>
</dbReference>
<dbReference type="InterPro" id="IPR007860">
    <property type="entry name" value="DNA_mmatch_repair_MutS_con_dom"/>
</dbReference>
<dbReference type="InterPro" id="IPR045076">
    <property type="entry name" value="MutS"/>
</dbReference>
<dbReference type="InterPro" id="IPR036678">
    <property type="entry name" value="MutS_con_dom_sf"/>
</dbReference>
<dbReference type="InterPro" id="IPR027417">
    <property type="entry name" value="P-loop_NTPase"/>
</dbReference>
<dbReference type="NCBIfam" id="TIGR01070">
    <property type="entry name" value="mutS1"/>
    <property type="match status" value="1"/>
</dbReference>
<dbReference type="NCBIfam" id="NF003810">
    <property type="entry name" value="PRK05399.1"/>
    <property type="match status" value="1"/>
</dbReference>
<dbReference type="PANTHER" id="PTHR11361:SF34">
    <property type="entry name" value="DNA MISMATCH REPAIR PROTEIN MSH1, MITOCHONDRIAL"/>
    <property type="match status" value="1"/>
</dbReference>
<dbReference type="PANTHER" id="PTHR11361">
    <property type="entry name" value="DNA MISMATCH REPAIR PROTEIN MUTS FAMILY MEMBER"/>
    <property type="match status" value="1"/>
</dbReference>
<dbReference type="Pfam" id="PF01624">
    <property type="entry name" value="MutS_I"/>
    <property type="match status" value="1"/>
</dbReference>
<dbReference type="Pfam" id="PF05188">
    <property type="entry name" value="MutS_II"/>
    <property type="match status" value="1"/>
</dbReference>
<dbReference type="Pfam" id="PF05192">
    <property type="entry name" value="MutS_III"/>
    <property type="match status" value="1"/>
</dbReference>
<dbReference type="Pfam" id="PF05190">
    <property type="entry name" value="MutS_IV"/>
    <property type="match status" value="1"/>
</dbReference>
<dbReference type="Pfam" id="PF00488">
    <property type="entry name" value="MutS_V"/>
    <property type="match status" value="1"/>
</dbReference>
<dbReference type="PIRSF" id="PIRSF037677">
    <property type="entry name" value="DNA_mis_repair_Msh6"/>
    <property type="match status" value="1"/>
</dbReference>
<dbReference type="SMART" id="SM00534">
    <property type="entry name" value="MUTSac"/>
    <property type="match status" value="1"/>
</dbReference>
<dbReference type="SMART" id="SM00533">
    <property type="entry name" value="MUTSd"/>
    <property type="match status" value="1"/>
</dbReference>
<dbReference type="SUPFAM" id="SSF55271">
    <property type="entry name" value="DNA repair protein MutS, domain I"/>
    <property type="match status" value="1"/>
</dbReference>
<dbReference type="SUPFAM" id="SSF53150">
    <property type="entry name" value="DNA repair protein MutS, domain II"/>
    <property type="match status" value="1"/>
</dbReference>
<dbReference type="SUPFAM" id="SSF48334">
    <property type="entry name" value="DNA repair protein MutS, domain III"/>
    <property type="match status" value="1"/>
</dbReference>
<dbReference type="SUPFAM" id="SSF52540">
    <property type="entry name" value="P-loop containing nucleoside triphosphate hydrolases"/>
    <property type="match status" value="1"/>
</dbReference>
<dbReference type="PROSITE" id="PS00486">
    <property type="entry name" value="DNA_MISMATCH_REPAIR_2"/>
    <property type="match status" value="1"/>
</dbReference>
<protein>
    <recommendedName>
        <fullName evidence="1">DNA mismatch repair protein MutS</fullName>
    </recommendedName>
</protein>
<keyword id="KW-0067">ATP-binding</keyword>
<keyword id="KW-0227">DNA damage</keyword>
<keyword id="KW-0234">DNA repair</keyword>
<keyword id="KW-0238">DNA-binding</keyword>
<keyword id="KW-0547">Nucleotide-binding</keyword>
<reference key="1">
    <citation type="journal article" date="2000" name="Nature">
        <title>The genome sequence of the plant pathogen Xylella fastidiosa.</title>
        <authorList>
            <person name="Simpson A.J.G."/>
            <person name="Reinach F.C."/>
            <person name="Arruda P."/>
            <person name="Abreu F.A."/>
            <person name="Acencio M."/>
            <person name="Alvarenga R."/>
            <person name="Alves L.M.C."/>
            <person name="Araya J.E."/>
            <person name="Baia G.S."/>
            <person name="Baptista C.S."/>
            <person name="Barros M.H."/>
            <person name="Bonaccorsi E.D."/>
            <person name="Bordin S."/>
            <person name="Bove J.M."/>
            <person name="Briones M.R.S."/>
            <person name="Bueno M.R.P."/>
            <person name="Camargo A.A."/>
            <person name="Camargo L.E.A."/>
            <person name="Carraro D.M."/>
            <person name="Carrer H."/>
            <person name="Colauto N.B."/>
            <person name="Colombo C."/>
            <person name="Costa F.F."/>
            <person name="Costa M.C.R."/>
            <person name="Costa-Neto C.M."/>
            <person name="Coutinho L.L."/>
            <person name="Cristofani M."/>
            <person name="Dias-Neto E."/>
            <person name="Docena C."/>
            <person name="El-Dorry H."/>
            <person name="Facincani A.P."/>
            <person name="Ferreira A.J.S."/>
            <person name="Ferreira V.C.A."/>
            <person name="Ferro J.A."/>
            <person name="Fraga J.S."/>
            <person name="Franca S.C."/>
            <person name="Franco M.C."/>
            <person name="Frohme M."/>
            <person name="Furlan L.R."/>
            <person name="Garnier M."/>
            <person name="Goldman G.H."/>
            <person name="Goldman M.H.S."/>
            <person name="Gomes S.L."/>
            <person name="Gruber A."/>
            <person name="Ho P.L."/>
            <person name="Hoheisel J.D."/>
            <person name="Junqueira M.L."/>
            <person name="Kemper E.L."/>
            <person name="Kitajima J.P."/>
            <person name="Krieger J.E."/>
            <person name="Kuramae E.E."/>
            <person name="Laigret F."/>
            <person name="Lambais M.R."/>
            <person name="Leite L.C.C."/>
            <person name="Lemos E.G.M."/>
            <person name="Lemos M.V.F."/>
            <person name="Lopes S.A."/>
            <person name="Lopes C.R."/>
            <person name="Machado J.A."/>
            <person name="Machado M.A."/>
            <person name="Madeira A.M.B.N."/>
            <person name="Madeira H.M.F."/>
            <person name="Marino C.L."/>
            <person name="Marques M.V."/>
            <person name="Martins E.A.L."/>
            <person name="Martins E.M.F."/>
            <person name="Matsukuma A.Y."/>
            <person name="Menck C.F.M."/>
            <person name="Miracca E.C."/>
            <person name="Miyaki C.Y."/>
            <person name="Monteiro-Vitorello C.B."/>
            <person name="Moon D.H."/>
            <person name="Nagai M.A."/>
            <person name="Nascimento A.L.T.O."/>
            <person name="Netto L.E.S."/>
            <person name="Nhani A. Jr."/>
            <person name="Nobrega F.G."/>
            <person name="Nunes L.R."/>
            <person name="Oliveira M.A."/>
            <person name="de Oliveira M.C."/>
            <person name="de Oliveira R.C."/>
            <person name="Palmieri D.A."/>
            <person name="Paris A."/>
            <person name="Peixoto B.R."/>
            <person name="Pereira G.A.G."/>
            <person name="Pereira H.A. Jr."/>
            <person name="Pesquero J.B."/>
            <person name="Quaggio R.B."/>
            <person name="Roberto P.G."/>
            <person name="Rodrigues V."/>
            <person name="de Rosa A.J.M."/>
            <person name="de Rosa V.E. Jr."/>
            <person name="de Sa R.G."/>
            <person name="Santelli R.V."/>
            <person name="Sawasaki H.E."/>
            <person name="da Silva A.C.R."/>
            <person name="da Silva A.M."/>
            <person name="da Silva F.R."/>
            <person name="Silva W.A. Jr."/>
            <person name="da Silveira J.F."/>
            <person name="Silvestri M.L.Z."/>
            <person name="Siqueira W.J."/>
            <person name="de Souza A.A."/>
            <person name="de Souza A.P."/>
            <person name="Terenzi M.F."/>
            <person name="Truffi D."/>
            <person name="Tsai S.M."/>
            <person name="Tsuhako M.H."/>
            <person name="Vallada H."/>
            <person name="Van Sluys M.A."/>
            <person name="Verjovski-Almeida S."/>
            <person name="Vettore A.L."/>
            <person name="Zago M.A."/>
            <person name="Zatz M."/>
            <person name="Meidanis J."/>
            <person name="Setubal J.C."/>
        </authorList>
    </citation>
    <scope>NUCLEOTIDE SEQUENCE [LARGE SCALE GENOMIC DNA]</scope>
    <source>
        <strain>9a5c</strain>
    </source>
</reference>
<sequence>MREKPEGGKGMAEHTPLMKQYFAAKAEYPDLLLFFRMGDFYELFHQDARKAARLLDITLTQRGSSGGAPIPMAGVPVHAYEGYLARLIALGESVAICEQIGDPGLAKGLVERKVVRIVTPGTITDEVLLEERRDTLLMALSRSKNCYGLAWADLAGGRFLVNEVNSEEALEAELARLEPAELLLPDEDAWPEYLQQRNGVRRRPPWLFDADSGRRKLLAFFKLHDLSGFGIENNPQATAAAGALLGYIEETQKQRLPHLTSITMETVGEAITMNAATRRHLELDTRVDGESRHTLLGVLDSTVTPMGGRLLRRWLHRPLRLREVVRQRHAAVGSMIDRDLDNKLMETFRRLGDMERILTRVALRSARPRDISTLRDSLSLLPRLRELLNASDSPRLRVLYAELGEHDSTASLLVKAVAEQPPLKLTDGGVIASEYDVELDELRKLSNNADQFLIDLETRERESSGISTLKVGYNRVHGYYIEISKGQADKAPVHYTRRQTLTNAERYITEELKAFEDKVLSARDRALVREKLLYEQLLDTVGAQLEPLKRCAAALSELDVLVCFAERAQTLDWVRPELEHTSCLHIEGGRHPVVEAVREQRFEPNDLDLHPERRMLVITGPNMGGKSTYMRQNALIVLLAYIGSYVPASRALIGPIDRIMTRIGAGDDLARGQSTFMLEMTETSYILHHATAQSLVLMDEIGRGTSTYDGLALADAVARHLAHINRCYTLFATHYFELTALADETYEGGLSGIANVHFDAVEHSERLVFMHTVKDGPANRSFGLQVAALAGLPAAAVAHARRRLAELEQRGRESHVSEITPLALDAPQQCSLFASAPSAAQEALVALHPDELTPKQALEALYRLKALL</sequence>
<accession>Q9PCR2</accession>
<organism>
    <name type="scientific">Xylella fastidiosa (strain 9a5c)</name>
    <dbReference type="NCBI Taxonomy" id="160492"/>
    <lineage>
        <taxon>Bacteria</taxon>
        <taxon>Pseudomonadati</taxon>
        <taxon>Pseudomonadota</taxon>
        <taxon>Gammaproteobacteria</taxon>
        <taxon>Lysobacterales</taxon>
        <taxon>Lysobacteraceae</taxon>
        <taxon>Xylella</taxon>
    </lineage>
</organism>